<geneLocation type="mitochondrion"/>
<organism>
    <name type="scientific">Contopus virens</name>
    <name type="common">Eastern wood-pewee</name>
    <name type="synonym">Muscicapa virens</name>
    <dbReference type="NCBI Taxonomy" id="183524"/>
    <lineage>
        <taxon>Eukaryota</taxon>
        <taxon>Metazoa</taxon>
        <taxon>Chordata</taxon>
        <taxon>Craniata</taxon>
        <taxon>Vertebrata</taxon>
        <taxon>Euteleostomi</taxon>
        <taxon>Archelosauria</taxon>
        <taxon>Archosauria</taxon>
        <taxon>Dinosauria</taxon>
        <taxon>Saurischia</taxon>
        <taxon>Theropoda</taxon>
        <taxon>Coelurosauria</taxon>
        <taxon>Aves</taxon>
        <taxon>Neognathae</taxon>
        <taxon>Neoaves</taxon>
        <taxon>Telluraves</taxon>
        <taxon>Australaves</taxon>
        <taxon>Passeriformes</taxon>
        <taxon>Tyrannidae</taxon>
        <taxon>Contopus</taxon>
    </lineage>
</organism>
<keyword id="KW-0249">Electron transport</keyword>
<keyword id="KW-0349">Heme</keyword>
<keyword id="KW-0408">Iron</keyword>
<keyword id="KW-0472">Membrane</keyword>
<keyword id="KW-0479">Metal-binding</keyword>
<keyword id="KW-0496">Mitochondrion</keyword>
<keyword id="KW-0999">Mitochondrion inner membrane</keyword>
<keyword id="KW-0679">Respiratory chain</keyword>
<keyword id="KW-0812">Transmembrane</keyword>
<keyword id="KW-1133">Transmembrane helix</keyword>
<keyword id="KW-0813">Transport</keyword>
<keyword id="KW-0830">Ubiquinone</keyword>
<proteinExistence type="inferred from homology"/>
<dbReference type="EMBL" id="AF447610">
    <property type="protein sequence ID" value="AAL65929.1"/>
    <property type="molecule type" value="Genomic_DNA"/>
</dbReference>
<dbReference type="SMR" id="Q8WBP9"/>
<dbReference type="GO" id="GO:0005743">
    <property type="term" value="C:mitochondrial inner membrane"/>
    <property type="evidence" value="ECO:0007669"/>
    <property type="project" value="UniProtKB-SubCell"/>
</dbReference>
<dbReference type="GO" id="GO:0045275">
    <property type="term" value="C:respiratory chain complex III"/>
    <property type="evidence" value="ECO:0007669"/>
    <property type="project" value="InterPro"/>
</dbReference>
<dbReference type="GO" id="GO:0046872">
    <property type="term" value="F:metal ion binding"/>
    <property type="evidence" value="ECO:0007669"/>
    <property type="project" value="UniProtKB-KW"/>
</dbReference>
<dbReference type="GO" id="GO:0008121">
    <property type="term" value="F:ubiquinol-cytochrome-c reductase activity"/>
    <property type="evidence" value="ECO:0007669"/>
    <property type="project" value="InterPro"/>
</dbReference>
<dbReference type="GO" id="GO:0006122">
    <property type="term" value="P:mitochondrial electron transport, ubiquinol to cytochrome c"/>
    <property type="evidence" value="ECO:0007669"/>
    <property type="project" value="TreeGrafter"/>
</dbReference>
<dbReference type="CDD" id="cd00290">
    <property type="entry name" value="cytochrome_b_C"/>
    <property type="match status" value="1"/>
</dbReference>
<dbReference type="CDD" id="cd00284">
    <property type="entry name" value="Cytochrome_b_N"/>
    <property type="match status" value="1"/>
</dbReference>
<dbReference type="FunFam" id="1.20.810.10:FF:000002">
    <property type="entry name" value="Cytochrome b"/>
    <property type="match status" value="1"/>
</dbReference>
<dbReference type="Gene3D" id="1.20.810.10">
    <property type="entry name" value="Cytochrome Bc1 Complex, Chain C"/>
    <property type="match status" value="1"/>
</dbReference>
<dbReference type="InterPro" id="IPR005798">
    <property type="entry name" value="Cyt_b/b6_C"/>
</dbReference>
<dbReference type="InterPro" id="IPR036150">
    <property type="entry name" value="Cyt_b/b6_C_sf"/>
</dbReference>
<dbReference type="InterPro" id="IPR005797">
    <property type="entry name" value="Cyt_b/b6_N"/>
</dbReference>
<dbReference type="InterPro" id="IPR027387">
    <property type="entry name" value="Cytb/b6-like_sf"/>
</dbReference>
<dbReference type="InterPro" id="IPR030689">
    <property type="entry name" value="Cytochrome_b"/>
</dbReference>
<dbReference type="InterPro" id="IPR048260">
    <property type="entry name" value="Cytochrome_b_C_euk/bac"/>
</dbReference>
<dbReference type="InterPro" id="IPR048259">
    <property type="entry name" value="Cytochrome_b_N_euk/bac"/>
</dbReference>
<dbReference type="InterPro" id="IPR016174">
    <property type="entry name" value="Di-haem_cyt_TM"/>
</dbReference>
<dbReference type="PANTHER" id="PTHR19271">
    <property type="entry name" value="CYTOCHROME B"/>
    <property type="match status" value="1"/>
</dbReference>
<dbReference type="PANTHER" id="PTHR19271:SF16">
    <property type="entry name" value="CYTOCHROME B"/>
    <property type="match status" value="1"/>
</dbReference>
<dbReference type="Pfam" id="PF00032">
    <property type="entry name" value="Cytochrom_B_C"/>
    <property type="match status" value="1"/>
</dbReference>
<dbReference type="Pfam" id="PF00033">
    <property type="entry name" value="Cytochrome_B"/>
    <property type="match status" value="1"/>
</dbReference>
<dbReference type="PIRSF" id="PIRSF038885">
    <property type="entry name" value="COB"/>
    <property type="match status" value="1"/>
</dbReference>
<dbReference type="SUPFAM" id="SSF81648">
    <property type="entry name" value="a domain/subunit of cytochrome bc1 complex (Ubiquinol-cytochrome c reductase)"/>
    <property type="match status" value="1"/>
</dbReference>
<dbReference type="SUPFAM" id="SSF81342">
    <property type="entry name" value="Transmembrane di-heme cytochromes"/>
    <property type="match status" value="1"/>
</dbReference>
<dbReference type="PROSITE" id="PS51003">
    <property type="entry name" value="CYTB_CTER"/>
    <property type="match status" value="1"/>
</dbReference>
<dbReference type="PROSITE" id="PS51002">
    <property type="entry name" value="CYTB_NTER"/>
    <property type="match status" value="1"/>
</dbReference>
<protein>
    <recommendedName>
        <fullName>Cytochrome b</fullName>
    </recommendedName>
    <alternativeName>
        <fullName>Complex III subunit 3</fullName>
    </alternativeName>
    <alternativeName>
        <fullName>Complex III subunit III</fullName>
    </alternativeName>
    <alternativeName>
        <fullName>Cytochrome b-c1 complex subunit 3</fullName>
    </alternativeName>
    <alternativeName>
        <fullName>Ubiquinol-cytochrome-c reductase complex cytochrome b subunit</fullName>
    </alternativeName>
</protein>
<accession>Q8WBP9</accession>
<reference key="1">
    <citation type="journal article" date="2002" name="Mol. Phylogenet. Evol.">
        <title>Phylogeny and character evolution in the Empidonax group of tyrant flycatchers (Aves: Tyrannidae): a test of W.E. Lanyon's hypothesis using mtDNA sequences.</title>
        <authorList>
            <person name="Cicero C."/>
            <person name="Johnson N.K."/>
        </authorList>
    </citation>
    <scope>NUCLEOTIDE SEQUENCE [GENOMIC DNA]</scope>
    <source>
        <strain>Isolate MVZ 168655</strain>
    </source>
</reference>
<name>CYB_CONVI</name>
<comment type="function">
    <text evidence="2">Component of the ubiquinol-cytochrome c reductase complex (complex III or cytochrome b-c1 complex) that is part of the mitochondrial respiratory chain. The b-c1 complex mediates electron transfer from ubiquinol to cytochrome c. Contributes to the generation of a proton gradient across the mitochondrial membrane that is then used for ATP synthesis.</text>
</comment>
<comment type="cofactor">
    <cofactor evidence="2">
        <name>heme b</name>
        <dbReference type="ChEBI" id="CHEBI:60344"/>
    </cofactor>
    <text evidence="2">Binds 2 heme b groups non-covalently.</text>
</comment>
<comment type="subunit">
    <text evidence="2">The cytochrome bc1 complex contains 11 subunits: 3 respiratory subunits (MT-CYB, CYC1 and UQCRFS1), 2 core proteins (UQCRC1 and UQCRC2) and 6 low-molecular weight proteins (UQCRH/QCR6, UQCRB/QCR7, UQCRQ/QCR8, UQCR10/QCR9, UQCR11/QCR10 and a cleavage product of UQCRFS1). This cytochrome bc1 complex then forms a dimer.</text>
</comment>
<comment type="subcellular location">
    <subcellularLocation>
        <location evidence="2">Mitochondrion inner membrane</location>
        <topology evidence="2">Multi-pass membrane protein</topology>
    </subcellularLocation>
</comment>
<comment type="miscellaneous">
    <text evidence="1">Heme 1 (or BL or b562) is low-potential and absorbs at about 562 nm, and heme 2 (or BH or b566) is high-potential and absorbs at about 566 nm.</text>
</comment>
<comment type="similarity">
    <text evidence="3 4">Belongs to the cytochrome b family.</text>
</comment>
<comment type="caution">
    <text evidence="2">The full-length protein contains only eight transmembrane helices, not nine as predicted by bioinformatics tools.</text>
</comment>
<gene>
    <name type="primary">MT-CYB</name>
    <name type="synonym">COB</name>
    <name type="synonym">CYTB</name>
    <name type="synonym">MTCYB</name>
</gene>
<sequence>MAPNLRKHHPLLKMVNNSLIDLPTPSNISAWWNFGSLLGICLATQIITGLLLAMHYTADTSLAFMSVAHTCRNVQFGWLIRNLHANGASFFFICIYLHIGRGFYYGSYLYKETWNTGVILLLTLMATAFVGYVLPWGQMSFWGATVITNLFSAIPYIGQTLVEWAWGGFSVDNPTLTRFFALHFLLPFMIAGLTLIHLTFLHETGSNNPLGISSDCDKIPFHPYFSTKDILGFIILFLPLMTLALFSPNLLGDPENFTPANPLVTPPHIKPEWYFLFAYAILRSIPNKLGGVLALVASVLVLFLAPFLHMSKQRTMTFRPLSQLLFWTLVANLLILTWIGSQPVEHPFIIIGQLASLTYFTILLILFPIVGTLENKLLKF</sequence>
<evidence type="ECO:0000250" key="1"/>
<evidence type="ECO:0000250" key="2">
    <source>
        <dbReference type="UniProtKB" id="P00157"/>
    </source>
</evidence>
<evidence type="ECO:0000255" key="3">
    <source>
        <dbReference type="PROSITE-ProRule" id="PRU00967"/>
    </source>
</evidence>
<evidence type="ECO:0000255" key="4">
    <source>
        <dbReference type="PROSITE-ProRule" id="PRU00968"/>
    </source>
</evidence>
<feature type="chain" id="PRO_0000060806" description="Cytochrome b">
    <location>
        <begin position="1"/>
        <end position="380"/>
    </location>
</feature>
<feature type="transmembrane region" description="Helical" evidence="2">
    <location>
        <begin position="34"/>
        <end position="54"/>
    </location>
</feature>
<feature type="transmembrane region" description="Helical" evidence="2">
    <location>
        <begin position="78"/>
        <end position="99"/>
    </location>
</feature>
<feature type="transmembrane region" description="Helical" evidence="2">
    <location>
        <begin position="114"/>
        <end position="134"/>
    </location>
</feature>
<feature type="transmembrane region" description="Helical" evidence="2">
    <location>
        <begin position="179"/>
        <end position="199"/>
    </location>
</feature>
<feature type="transmembrane region" description="Helical" evidence="2">
    <location>
        <begin position="227"/>
        <end position="247"/>
    </location>
</feature>
<feature type="transmembrane region" description="Helical" evidence="2">
    <location>
        <begin position="289"/>
        <end position="309"/>
    </location>
</feature>
<feature type="transmembrane region" description="Helical" evidence="2">
    <location>
        <begin position="321"/>
        <end position="341"/>
    </location>
</feature>
<feature type="transmembrane region" description="Helical" evidence="2">
    <location>
        <begin position="348"/>
        <end position="368"/>
    </location>
</feature>
<feature type="binding site" description="axial binding residue" evidence="2">
    <location>
        <position position="84"/>
    </location>
    <ligand>
        <name>heme b</name>
        <dbReference type="ChEBI" id="CHEBI:60344"/>
        <label>b562</label>
    </ligand>
    <ligandPart>
        <name>Fe</name>
        <dbReference type="ChEBI" id="CHEBI:18248"/>
    </ligandPart>
</feature>
<feature type="binding site" description="axial binding residue" evidence="2">
    <location>
        <position position="98"/>
    </location>
    <ligand>
        <name>heme b</name>
        <dbReference type="ChEBI" id="CHEBI:60344"/>
        <label>b566</label>
    </ligand>
    <ligandPart>
        <name>Fe</name>
        <dbReference type="ChEBI" id="CHEBI:18248"/>
    </ligandPart>
</feature>
<feature type="binding site" description="axial binding residue" evidence="2">
    <location>
        <position position="183"/>
    </location>
    <ligand>
        <name>heme b</name>
        <dbReference type="ChEBI" id="CHEBI:60344"/>
        <label>b562</label>
    </ligand>
    <ligandPart>
        <name>Fe</name>
        <dbReference type="ChEBI" id="CHEBI:18248"/>
    </ligandPart>
</feature>
<feature type="binding site" description="axial binding residue" evidence="2">
    <location>
        <position position="197"/>
    </location>
    <ligand>
        <name>heme b</name>
        <dbReference type="ChEBI" id="CHEBI:60344"/>
        <label>b566</label>
    </ligand>
    <ligandPart>
        <name>Fe</name>
        <dbReference type="ChEBI" id="CHEBI:18248"/>
    </ligandPart>
</feature>
<feature type="binding site" evidence="2">
    <location>
        <position position="202"/>
    </location>
    <ligand>
        <name>a ubiquinone</name>
        <dbReference type="ChEBI" id="CHEBI:16389"/>
    </ligand>
</feature>